<accession>Q46820</accession>
<accession>Q2M9V4</accession>
<organism>
    <name type="scientific">Escherichia coli (strain K12)</name>
    <dbReference type="NCBI Taxonomy" id="83333"/>
    <lineage>
        <taxon>Bacteria</taxon>
        <taxon>Pseudomonadati</taxon>
        <taxon>Pseudomonadota</taxon>
        <taxon>Gammaproteobacteria</taxon>
        <taxon>Enterobacterales</taxon>
        <taxon>Enterobacteriaceae</taxon>
        <taxon>Escherichia</taxon>
    </lineage>
</organism>
<feature type="chain" id="PRO_0000170802" description="Putative oxidoreductase UacF">
    <location>
        <begin position="1"/>
        <end position="639"/>
    </location>
</feature>
<feature type="domain" description="4Fe-4S ferredoxin-type 1" evidence="2">
    <location>
        <begin position="3"/>
        <end position="32"/>
    </location>
</feature>
<feature type="domain" description="4Fe-4S ferredoxin-type 2" evidence="2">
    <location>
        <begin position="47"/>
        <end position="77"/>
    </location>
</feature>
<feature type="domain" description="4Fe-4S ferredoxin-type 3" evidence="2">
    <location>
        <begin position="78"/>
        <end position="107"/>
    </location>
</feature>
<feature type="domain" description="4Fe-4S ferredoxin-type 4" evidence="2">
    <location>
        <begin position="110"/>
        <end position="139"/>
    </location>
</feature>
<feature type="domain" description="4Fe-4S ferredoxin-type 5" evidence="2">
    <location>
        <begin position="201"/>
        <end position="235"/>
    </location>
</feature>
<feature type="binding site" evidence="1">
    <location>
        <position position="12"/>
    </location>
    <ligand>
        <name>[4Fe-4S] cluster</name>
        <dbReference type="ChEBI" id="CHEBI:49883"/>
        <label>1</label>
    </ligand>
</feature>
<feature type="binding site" evidence="1">
    <location>
        <position position="15"/>
    </location>
    <ligand>
        <name>[4Fe-4S] cluster</name>
        <dbReference type="ChEBI" id="CHEBI:49883"/>
        <label>1</label>
    </ligand>
</feature>
<feature type="binding site" evidence="1">
    <location>
        <position position="18"/>
    </location>
    <ligand>
        <name>[4Fe-4S] cluster</name>
        <dbReference type="ChEBI" id="CHEBI:49883"/>
        <label>1</label>
    </ligand>
</feature>
<feature type="binding site" evidence="1">
    <location>
        <position position="22"/>
    </location>
    <ligand>
        <name>[4Fe-4S] cluster</name>
        <dbReference type="ChEBI" id="CHEBI:49883"/>
        <label>2</label>
    </ligand>
</feature>
<feature type="binding site" evidence="1">
    <location>
        <position position="56"/>
    </location>
    <ligand>
        <name>[4Fe-4S] cluster</name>
        <dbReference type="ChEBI" id="CHEBI:49883"/>
        <label>3</label>
    </ligand>
</feature>
<feature type="binding site" evidence="1">
    <location>
        <position position="59"/>
    </location>
    <ligand>
        <name>[4Fe-4S] cluster</name>
        <dbReference type="ChEBI" id="CHEBI:49883"/>
        <label>3</label>
    </ligand>
</feature>
<feature type="binding site" evidence="1">
    <location>
        <position position="64"/>
    </location>
    <ligand>
        <name>[4Fe-4S] cluster</name>
        <dbReference type="ChEBI" id="CHEBI:49883"/>
        <label>3</label>
    </ligand>
</feature>
<feature type="binding site" evidence="1">
    <location>
        <position position="68"/>
    </location>
    <ligand>
        <name>[4Fe-4S] cluster</name>
        <dbReference type="ChEBI" id="CHEBI:49883"/>
        <label>4</label>
    </ligand>
</feature>
<feature type="binding site" evidence="1">
    <location>
        <position position="87"/>
    </location>
    <ligand>
        <name>[4Fe-4S] cluster</name>
        <dbReference type="ChEBI" id="CHEBI:49883"/>
        <label>4</label>
    </ligand>
</feature>
<feature type="binding site" evidence="1">
    <location>
        <position position="90"/>
    </location>
    <ligand>
        <name>[4Fe-4S] cluster</name>
        <dbReference type="ChEBI" id="CHEBI:49883"/>
        <label>4</label>
    </ligand>
</feature>
<feature type="binding site" evidence="1">
    <location>
        <position position="93"/>
    </location>
    <ligand>
        <name>[4Fe-4S] cluster</name>
        <dbReference type="ChEBI" id="CHEBI:49883"/>
        <label>4</label>
    </ligand>
</feature>
<feature type="binding site" evidence="1">
    <location>
        <position position="97"/>
    </location>
    <ligand>
        <name>[4Fe-4S] cluster</name>
        <dbReference type="ChEBI" id="CHEBI:49883"/>
        <label>3</label>
    </ligand>
</feature>
<feature type="binding site" evidence="1">
    <location>
        <position position="112"/>
    </location>
    <ligand>
        <name>[4Fe-4S] cluster</name>
        <dbReference type="ChEBI" id="CHEBI:49883"/>
        <label>2</label>
    </ligand>
</feature>
<feature type="binding site" evidence="1">
    <location>
        <position position="115"/>
    </location>
    <ligand>
        <name>[4Fe-4S] cluster</name>
        <dbReference type="ChEBI" id="CHEBI:49883"/>
        <label>2</label>
    </ligand>
</feature>
<feature type="binding site" evidence="1">
    <location>
        <position position="125"/>
    </location>
    <ligand>
        <name>[4Fe-4S] cluster</name>
        <dbReference type="ChEBI" id="CHEBI:49883"/>
        <label>2</label>
    </ligand>
</feature>
<feature type="binding site" evidence="1">
    <location>
        <position position="129"/>
    </location>
    <ligand>
        <name>[4Fe-4S] cluster</name>
        <dbReference type="ChEBI" id="CHEBI:49883"/>
        <label>1</label>
    </ligand>
</feature>
<feature type="binding site" evidence="2">
    <location>
        <position position="210"/>
    </location>
    <ligand>
        <name>[4Fe-4S] cluster</name>
        <dbReference type="ChEBI" id="CHEBI:49883"/>
        <label>5</label>
    </ligand>
</feature>
<feature type="binding site" evidence="2">
    <location>
        <position position="213"/>
    </location>
    <ligand>
        <name>[4Fe-4S] cluster</name>
        <dbReference type="ChEBI" id="CHEBI:49883"/>
        <label>5</label>
    </ligand>
</feature>
<feature type="binding site" evidence="2">
    <location>
        <position position="219"/>
    </location>
    <ligand>
        <name>[4Fe-4S] cluster</name>
        <dbReference type="ChEBI" id="CHEBI:49883"/>
        <label>5</label>
    </ligand>
</feature>
<feature type="binding site" evidence="2">
    <location>
        <position position="223"/>
    </location>
    <ligand>
        <name>[4Fe-4S] cluster</name>
        <dbReference type="ChEBI" id="CHEBI:49883"/>
        <label>5</label>
    </ligand>
</feature>
<protein>
    <recommendedName>
        <fullName evidence="5">Putative oxidoreductase UacF</fullName>
    </recommendedName>
    <alternativeName>
        <fullName evidence="4">Uric acid degradation formate-related element</fullName>
    </alternativeName>
</protein>
<keyword id="KW-0004">4Fe-4S</keyword>
<keyword id="KW-0408">Iron</keyword>
<keyword id="KW-0411">Iron-sulfur</keyword>
<keyword id="KW-0479">Metal-binding</keyword>
<keyword id="KW-0560">Oxidoreductase</keyword>
<keyword id="KW-1185">Reference proteome</keyword>
<keyword id="KW-0677">Repeat</keyword>
<comment type="function">
    <text evidence="3">Involved in formate-dependent uric acid degradation under microaerobic and anaerobic conditions. May reduce the enzymes necessary for uric acid degradation.</text>
</comment>
<comment type="cofactor">
    <cofactor evidence="1">
        <name>[4Fe-4S] cluster</name>
        <dbReference type="ChEBI" id="CHEBI:49883"/>
    </cofactor>
    <text evidence="1 2">Binds 5 [4Fe-4S] clusters.</text>
</comment>
<comment type="induction">
    <text evidence="3">Induced under anaerobic and microaerobic conditions. Expression increases in the presence of hypoxanthine, xanthine and uric acid. Expression is reduced in the presence of nitrite and nitrate under anaerobic conditions.</text>
</comment>
<comment type="domain">
    <text evidence="6">Contains an N-terminal 4Fe-4S dicluster domain and a C-terminal pyridine nucleotide-disulfide oxidoreductase domain.</text>
</comment>
<comment type="sequence caution" evidence="5">
    <conflict type="erroneous initiation">
        <sequence resource="EMBL-CDS" id="AAA83068"/>
    </conflict>
    <text>Extended N-terminus.</text>
</comment>
<gene>
    <name evidence="4" type="primary">uacF</name>
    <name type="synonym">ygfT</name>
    <name type="ordered locus">b2887</name>
    <name type="ordered locus">JW5469</name>
</gene>
<reference key="1">
    <citation type="journal article" date="1997" name="Science">
        <title>The complete genome sequence of Escherichia coli K-12.</title>
        <authorList>
            <person name="Blattner F.R."/>
            <person name="Plunkett G. III"/>
            <person name="Bloch C.A."/>
            <person name="Perna N.T."/>
            <person name="Burland V."/>
            <person name="Riley M."/>
            <person name="Collado-Vides J."/>
            <person name="Glasner J.D."/>
            <person name="Rode C.K."/>
            <person name="Mayhew G.F."/>
            <person name="Gregor J."/>
            <person name="Davis N.W."/>
            <person name="Kirkpatrick H.A."/>
            <person name="Goeden M.A."/>
            <person name="Rose D.J."/>
            <person name="Mau B."/>
            <person name="Shao Y."/>
        </authorList>
    </citation>
    <scope>NUCLEOTIDE SEQUENCE [LARGE SCALE GENOMIC DNA]</scope>
    <source>
        <strain>K12 / MG1655 / ATCC 47076</strain>
    </source>
</reference>
<reference key="2">
    <citation type="journal article" date="2006" name="Mol. Syst. Biol.">
        <title>Highly accurate genome sequences of Escherichia coli K-12 strains MG1655 and W3110.</title>
        <authorList>
            <person name="Hayashi K."/>
            <person name="Morooka N."/>
            <person name="Yamamoto Y."/>
            <person name="Fujita K."/>
            <person name="Isono K."/>
            <person name="Choi S."/>
            <person name="Ohtsubo E."/>
            <person name="Baba T."/>
            <person name="Wanner B.L."/>
            <person name="Mori H."/>
            <person name="Horiuchi T."/>
        </authorList>
    </citation>
    <scope>NUCLEOTIDE SEQUENCE [LARGE SCALE GENOMIC DNA]</scope>
    <source>
        <strain>K12 / W3110 / ATCC 27325 / DSM 5911</strain>
    </source>
</reference>
<reference key="3">
    <citation type="journal article" date="2019" name="J. Bacteriol.">
        <title>Identification of a formate-dependent uric acid degradation pathway in Escherichia coli.</title>
        <authorList>
            <person name="Iwadate Y."/>
            <person name="Kato J.I."/>
        </authorList>
    </citation>
    <scope>FUNCTION</scope>
    <scope>INDUCTION</scope>
    <scope>DOMAIN</scope>
</reference>
<proteinExistence type="evidence at transcript level"/>
<evidence type="ECO:0000250" key="1">
    <source>
        <dbReference type="UniProtKB" id="P0AAJ3"/>
    </source>
</evidence>
<evidence type="ECO:0000255" key="2">
    <source>
        <dbReference type="PROSITE-ProRule" id="PRU00711"/>
    </source>
</evidence>
<evidence type="ECO:0000269" key="3">
    <source>
    </source>
</evidence>
<evidence type="ECO:0000303" key="4">
    <source>
    </source>
</evidence>
<evidence type="ECO:0000305" key="5"/>
<evidence type="ECO:0000305" key="6">
    <source>
    </source>
</evidence>
<sequence length="639" mass="69089">MNKFIAAEAAECIGCHACEIACAVAHNQENWPLSHSDFRPRIHVVGKGQAANPVACHHCNNAPCVTACPVNALTFQSDSVQLDEQKCIGCKRCAIACPFGVVEMVDTIAQKCDLCNQRSSGTQACIEVCPTQALRLMDDKGLQQIKVARQRKTAAGKASSDAQPSRSAALLPVNSRKGADKISASERKTHFGEIYCGLDPQQATYESDRCVYCAEKANCNWHCPLHNAIPDYIRLVQEGKIIEAAELCHQTSSLPEICGRVCPQDRLCEGACTLKDHSGAVSIGNLERYITDTALAMGWRPDVSKVVPRSEKVAVIGAGPAGLGCADILARAGVQVDVFDRHPEIGGMLTFGIPPFKLDKTVLSQRREIFTAMGIDFHLNCEIGRDITFSDLTSEYDAVFIGVGTYGMMRADLPHEDAPGVIQALPFLTAHTRQLMGLPESEEYPLTDVEGKRVVVLGGGDTTMDCLRTSIRLNAASVTCAYRRDEVSMPGSRKEVVNAREEGVEFQFNVQPQYIACDEDGRLTAVGLIRTAMGEPGPDGRRRPRPVAGSEFELPADVLIMAFGFQAHAMPWLQGSGIKLDKWGLIQTGDVGYLPTQTHLKKVFAGGDAVHGADLVVTAMAAGRQAARDMLTLFDTKAS</sequence>
<name>UACF_ECOLI</name>
<dbReference type="EMBL" id="U28375">
    <property type="protein sequence ID" value="AAA83068.1"/>
    <property type="status" value="ALT_INIT"/>
    <property type="molecule type" value="Genomic_DNA"/>
</dbReference>
<dbReference type="EMBL" id="U00096">
    <property type="protein sequence ID" value="AAC75925.2"/>
    <property type="molecule type" value="Genomic_DNA"/>
</dbReference>
<dbReference type="EMBL" id="AP009048">
    <property type="protein sequence ID" value="BAE76952.1"/>
    <property type="molecule type" value="Genomic_DNA"/>
</dbReference>
<dbReference type="PIR" id="G65072">
    <property type="entry name" value="G65072"/>
</dbReference>
<dbReference type="RefSeq" id="NP_417363.2">
    <property type="nucleotide sequence ID" value="NC_000913.3"/>
</dbReference>
<dbReference type="RefSeq" id="WP_001350545.1">
    <property type="nucleotide sequence ID" value="NZ_LN832404.1"/>
</dbReference>
<dbReference type="SMR" id="Q46820"/>
<dbReference type="BioGRID" id="4262335">
    <property type="interactions" value="24"/>
</dbReference>
<dbReference type="DIP" id="DIP-12175N"/>
<dbReference type="FunCoup" id="Q46820">
    <property type="interactions" value="459"/>
</dbReference>
<dbReference type="STRING" id="511145.b2887"/>
<dbReference type="PaxDb" id="511145-b2887"/>
<dbReference type="EnsemblBacteria" id="AAC75925">
    <property type="protein sequence ID" value="AAC75925"/>
    <property type="gene ID" value="b2887"/>
</dbReference>
<dbReference type="GeneID" id="949018"/>
<dbReference type="KEGG" id="ecj:JW5469"/>
<dbReference type="KEGG" id="eco:b2887"/>
<dbReference type="KEGG" id="ecoc:C3026_15825"/>
<dbReference type="PATRIC" id="fig|1411691.4.peg.3848"/>
<dbReference type="EchoBASE" id="EB2881"/>
<dbReference type="eggNOG" id="COG0493">
    <property type="taxonomic scope" value="Bacteria"/>
</dbReference>
<dbReference type="eggNOG" id="COG1142">
    <property type="taxonomic scope" value="Bacteria"/>
</dbReference>
<dbReference type="HOGENOM" id="CLU_000422_3_3_6"/>
<dbReference type="InParanoid" id="Q46820"/>
<dbReference type="OMA" id="PEYAPCI"/>
<dbReference type="OrthoDB" id="6609771at2"/>
<dbReference type="PhylomeDB" id="Q46820"/>
<dbReference type="BioCyc" id="EcoCyc:G7506-MONOMER"/>
<dbReference type="PRO" id="PR:Q46820"/>
<dbReference type="Proteomes" id="UP000000625">
    <property type="component" value="Chromosome"/>
</dbReference>
<dbReference type="GO" id="GO:0051539">
    <property type="term" value="F:4 iron, 4 sulfur cluster binding"/>
    <property type="evidence" value="ECO:0007669"/>
    <property type="project" value="UniProtKB-KW"/>
</dbReference>
<dbReference type="GO" id="GO:0046872">
    <property type="term" value="F:metal ion binding"/>
    <property type="evidence" value="ECO:0007669"/>
    <property type="project" value="UniProtKB-KW"/>
</dbReference>
<dbReference type="GO" id="GO:0016491">
    <property type="term" value="F:oxidoreductase activity"/>
    <property type="evidence" value="ECO:0007669"/>
    <property type="project" value="UniProtKB-KW"/>
</dbReference>
<dbReference type="GO" id="GO:0019628">
    <property type="term" value="P:urate catabolic process"/>
    <property type="evidence" value="ECO:0000316"/>
    <property type="project" value="EcoCyc"/>
</dbReference>
<dbReference type="CDD" id="cd10554">
    <property type="entry name" value="HycB_like"/>
    <property type="match status" value="1"/>
</dbReference>
<dbReference type="Gene3D" id="3.30.70.20">
    <property type="match status" value="2"/>
</dbReference>
<dbReference type="Gene3D" id="1.10.1060.10">
    <property type="entry name" value="Alpha-helical ferredoxin"/>
    <property type="match status" value="1"/>
</dbReference>
<dbReference type="Gene3D" id="3.50.50.60">
    <property type="entry name" value="FAD/NAD(P)-binding domain"/>
    <property type="match status" value="3"/>
</dbReference>
<dbReference type="InterPro" id="IPR017896">
    <property type="entry name" value="4Fe4S_Fe-S-bd"/>
</dbReference>
<dbReference type="InterPro" id="IPR017900">
    <property type="entry name" value="4Fe4S_Fe_S_CS"/>
</dbReference>
<dbReference type="InterPro" id="IPR028261">
    <property type="entry name" value="DPD_II"/>
</dbReference>
<dbReference type="InterPro" id="IPR036188">
    <property type="entry name" value="FAD/NAD-bd_sf"/>
</dbReference>
<dbReference type="InterPro" id="IPR023753">
    <property type="entry name" value="FAD/NAD-binding_dom"/>
</dbReference>
<dbReference type="InterPro" id="IPR006006">
    <property type="entry name" value="GltD-like"/>
</dbReference>
<dbReference type="InterPro" id="IPR009051">
    <property type="entry name" value="Helical_ferredxn"/>
</dbReference>
<dbReference type="NCBIfam" id="TIGR01318">
    <property type="entry name" value="gltD_gamma_fam"/>
    <property type="match status" value="1"/>
</dbReference>
<dbReference type="NCBIfam" id="NF009451">
    <property type="entry name" value="PRK12809.1"/>
    <property type="match status" value="1"/>
</dbReference>
<dbReference type="PANTHER" id="PTHR42783">
    <property type="entry name" value="GLUTAMATE SYNTHASE [NADPH] SMALL CHAIN"/>
    <property type="match status" value="1"/>
</dbReference>
<dbReference type="PANTHER" id="PTHR42783:SF3">
    <property type="entry name" value="GLUTAMATE SYNTHASE [NADPH] SMALL CHAIN-RELATED"/>
    <property type="match status" value="1"/>
</dbReference>
<dbReference type="Pfam" id="PF13247">
    <property type="entry name" value="Fer4_11"/>
    <property type="match status" value="1"/>
</dbReference>
<dbReference type="Pfam" id="PF14691">
    <property type="entry name" value="Fer4_20"/>
    <property type="match status" value="1"/>
</dbReference>
<dbReference type="Pfam" id="PF07992">
    <property type="entry name" value="Pyr_redox_2"/>
    <property type="match status" value="1"/>
</dbReference>
<dbReference type="PRINTS" id="PR00419">
    <property type="entry name" value="ADXRDTASE"/>
</dbReference>
<dbReference type="SUPFAM" id="SSF54862">
    <property type="entry name" value="4Fe-4S ferredoxins"/>
    <property type="match status" value="1"/>
</dbReference>
<dbReference type="SUPFAM" id="SSF51971">
    <property type="entry name" value="Nucleotide-binding domain"/>
    <property type="match status" value="1"/>
</dbReference>
<dbReference type="PROSITE" id="PS00198">
    <property type="entry name" value="4FE4S_FER_1"/>
    <property type="match status" value="1"/>
</dbReference>
<dbReference type="PROSITE" id="PS51379">
    <property type="entry name" value="4FE4S_FER_2"/>
    <property type="match status" value="5"/>
</dbReference>